<protein>
    <recommendedName>
        <fullName>Suppressor of tumorigenicity 7 protein</fullName>
    </recommendedName>
</protein>
<proteinExistence type="evidence at transcript level"/>
<sequence>MAEAGTGFLEQLKSCIVWSWTYLWTVWFFIVLFLVYILRVPLKINDNLSTVSMFLNTLTPKFYVALTGTSSLISGLILIFEWWYFRKYGTSFIEQVSVSHLRPLLGGVDNNSSNNSNSSNGDSDSNRQSVSECKVWRNPLNLFRGAEYNRYTWVTGREPLTYYDMNLSAQDHQTFFTCDSDHLRPADAIMQKAWRERNPQARISAAHEALEINEIRSRVEVPLIASSTIWEIKLLPKCATAYILLAEEEATTIAEAEKLFKQALKAGDGCYRRSQQLQHHGSQYEAQHRRDTNVLVYIKRRLAMCARRLGRTREAVKMMRDLMKEFPLLSMFNIHENLLEALLELQAYADVQAVLAKYDDISLPKSATICYTAALLKARAVSDKFSPEAASRRGLSTAEMNAVEAIHRAVEFNPHVPKYLLEMKSLILPPEHILKRGDSEAIAYAFFHLAHWKRVEGALNLLHCTWEGTFRMIPYPLEKGHLFYPYPICTETADRELLPSFHEVSVYPKKELPFFILFTAGLCSFTAMLALLTHQFPELMGVFAKAMIDIFCSAELRDWNCESIFMRVEDELEIPPAPQSQHFQN</sequence>
<reference key="1">
    <citation type="journal article" date="2003" name="Nature">
        <title>Comparative analyses of multi-species sequences from targeted genomic regions.</title>
        <authorList>
            <person name="Thomas J.W."/>
            <person name="Touchman J.W."/>
            <person name="Blakesley R.W."/>
            <person name="Bouffard G.G."/>
            <person name="Beckstrom-Sternberg S.M."/>
            <person name="Margulies E.H."/>
            <person name="Blanchette M."/>
            <person name="Siepel A.C."/>
            <person name="Thomas P.J."/>
            <person name="McDowell J.C."/>
            <person name="Maskeri B."/>
            <person name="Hansen N.F."/>
            <person name="Schwartz M.S."/>
            <person name="Weber R.J."/>
            <person name="Kent W.J."/>
            <person name="Karolchik D."/>
            <person name="Bruen T.C."/>
            <person name="Bevan R."/>
            <person name="Cutler D.J."/>
            <person name="Schwartz S."/>
            <person name="Elnitski L."/>
            <person name="Idol J.R."/>
            <person name="Prasad A.B."/>
            <person name="Lee-Lin S.-Q."/>
            <person name="Maduro V.V.B."/>
            <person name="Summers T.J."/>
            <person name="Portnoy M.E."/>
            <person name="Dietrich N.L."/>
            <person name="Akhter N."/>
            <person name="Ayele K."/>
            <person name="Benjamin B."/>
            <person name="Cariaga K."/>
            <person name="Brinkley C.P."/>
            <person name="Brooks S.Y."/>
            <person name="Granite S."/>
            <person name="Guan X."/>
            <person name="Gupta J."/>
            <person name="Haghighi P."/>
            <person name="Ho S.-L."/>
            <person name="Huang M.C."/>
            <person name="Karlins E."/>
            <person name="Laric P.L."/>
            <person name="Legaspi R."/>
            <person name="Lim M.J."/>
            <person name="Maduro Q.L."/>
            <person name="Masiello C.A."/>
            <person name="Mastrian S.D."/>
            <person name="McCloskey J.C."/>
            <person name="Pearson R."/>
            <person name="Stantripop S."/>
            <person name="Tiongson E.E."/>
            <person name="Tran J.T."/>
            <person name="Tsurgeon C."/>
            <person name="Vogt J.L."/>
            <person name="Walker M.A."/>
            <person name="Wetherby K.D."/>
            <person name="Wiggins L.S."/>
            <person name="Young A.C."/>
            <person name="Zhang L.-H."/>
            <person name="Osoegawa K."/>
            <person name="Zhu B."/>
            <person name="Zhao B."/>
            <person name="Shu C.L."/>
            <person name="De Jong P.J."/>
            <person name="Lawrence C.E."/>
            <person name="Smit A.F."/>
            <person name="Chakravarti A."/>
            <person name="Haussler D."/>
            <person name="Green P."/>
            <person name="Miller W."/>
            <person name="Green E.D."/>
        </authorList>
    </citation>
    <scope>NUCLEOTIDE SEQUENCE [LARGE SCALE GENOMIC DNA]</scope>
</reference>
<reference key="2">
    <citation type="journal article" date="2001" name="Nat. Genet.">
        <title>Mutational and functional analyses reveal that ST7 is a highly conserved tumor-suppressor gene on human chromosome 7q31.</title>
        <authorList>
            <person name="Zenklusen J.C."/>
            <person name="Conti C.J."/>
            <person name="Green E.D."/>
        </authorList>
    </citation>
    <scope>NUCLEOTIDE SEQUENCE [MRNA] OF 165-585 (ISOFORM 2)</scope>
</reference>
<comment type="subcellular location">
    <subcellularLocation>
        <location evidence="4">Membrane</location>
        <topology evidence="4">Multi-pass membrane protein</topology>
    </subcellularLocation>
</comment>
<comment type="alternative products">
    <event type="alternative splicing"/>
    <isoform>
        <id>A4D7R9-1</id>
        <name>1</name>
        <sequence type="displayed"/>
    </isoform>
    <isoform>
        <id>A4D7R9-2</id>
        <name>2</name>
        <sequence type="described" ref="VSP_034106 VSP_034107"/>
    </isoform>
</comment>
<comment type="similarity">
    <text evidence="4">Belongs to the ST7 family.</text>
</comment>
<accession>A4D7R9</accession>
<accession>Q9BDI1</accession>
<evidence type="ECO:0000250" key="1">
    <source>
        <dbReference type="UniProtKB" id="Q9NRC1"/>
    </source>
</evidence>
<evidence type="ECO:0000255" key="2"/>
<evidence type="ECO:0000303" key="3">
    <source>
    </source>
</evidence>
<evidence type="ECO:0000305" key="4"/>
<feature type="chain" id="PRO_0000339192" description="Suppressor of tumorigenicity 7 protein">
    <location>
        <begin position="1"/>
        <end position="585"/>
    </location>
</feature>
<feature type="transmembrane region" description="Helical" evidence="2">
    <location>
        <begin position="15"/>
        <end position="35"/>
    </location>
</feature>
<feature type="transmembrane region" description="Helical" evidence="2">
    <location>
        <begin position="62"/>
        <end position="82"/>
    </location>
</feature>
<feature type="transmembrane region" description="Helical" evidence="2">
    <location>
        <begin position="512"/>
        <end position="532"/>
    </location>
</feature>
<feature type="modified residue" description="Phosphoserine" evidence="1">
    <location>
        <position position="386"/>
    </location>
</feature>
<feature type="glycosylation site" description="N-linked (GlcNAc...) asparagine" evidence="2">
    <location>
        <position position="47"/>
    </location>
</feature>
<feature type="splice variant" id="VSP_034106" description="In isoform 2." evidence="3">
    <location>
        <begin position="215"/>
        <end position="237"/>
    </location>
</feature>
<feature type="splice variant" id="VSP_034107" description="In isoform 2." evidence="3">
    <original>MIDIFCSAELRDWNCESIFMRVEDELEIPPAPQSQHFQN</original>
    <variation>FLSTLFAPLNFVMEKVESILPSSLWHQLTRI</variation>
    <location>
        <begin position="547"/>
        <end position="585"/>
    </location>
</feature>
<feature type="sequence conflict" description="In Ref. 2; AAG24467." evidence="4" ref="2">
    <original>R</original>
    <variation>K</variation>
    <location>
        <position position="307"/>
    </location>
</feature>
<feature type="sequence conflict" description="In Ref. 2; AAG24467." evidence="4" ref="2">
    <original>KYD</original>
    <variation>ERG</variation>
    <location>
        <begin position="357"/>
        <end position="359"/>
    </location>
</feature>
<keyword id="KW-0025">Alternative splicing</keyword>
<keyword id="KW-0325">Glycoprotein</keyword>
<keyword id="KW-0472">Membrane</keyword>
<keyword id="KW-0597">Phosphoprotein</keyword>
<keyword id="KW-1185">Reference proteome</keyword>
<keyword id="KW-0812">Transmembrane</keyword>
<keyword id="KW-1133">Transmembrane helix</keyword>
<dbReference type="EMBL" id="DP000008">
    <property type="protein sequence ID" value="AAR16260.1"/>
    <property type="molecule type" value="Genomic_DNA"/>
</dbReference>
<dbReference type="EMBL" id="AY007801">
    <property type="protein sequence ID" value="AAG24467.1"/>
    <property type="molecule type" value="mRNA"/>
</dbReference>
<dbReference type="RefSeq" id="NP_776386.2">
    <molecule id="A4D7R9-2"/>
    <property type="nucleotide sequence ID" value="NM_173961.3"/>
</dbReference>
<dbReference type="RefSeq" id="XP_005205443.1">
    <molecule id="A4D7R9-1"/>
    <property type="nucleotide sequence ID" value="XM_005205386.5"/>
</dbReference>
<dbReference type="FunCoup" id="A4D7R9">
    <property type="interactions" value="363"/>
</dbReference>
<dbReference type="STRING" id="9913.ENSBTAP00000049962"/>
<dbReference type="GlyCosmos" id="A4D7R9">
    <property type="glycosylation" value="1 site, No reported glycans"/>
</dbReference>
<dbReference type="GlyGen" id="A4D7R9">
    <property type="glycosylation" value="1 site"/>
</dbReference>
<dbReference type="PaxDb" id="9913-ENSBTAP00000049962"/>
<dbReference type="Ensembl" id="ENSBTAT00000069581.2">
    <molecule id="A4D7R9-1"/>
    <property type="protein sequence ID" value="ENSBTAP00000068027.2"/>
    <property type="gene ID" value="ENSBTAG00000010756.7"/>
</dbReference>
<dbReference type="GeneID" id="280933"/>
<dbReference type="CTD" id="7982"/>
<dbReference type="VEuPathDB" id="HostDB:ENSBTAG00000010756"/>
<dbReference type="eggNOG" id="KOG3807">
    <property type="taxonomic scope" value="Eukaryota"/>
</dbReference>
<dbReference type="GeneTree" id="ENSGT00390000000873"/>
<dbReference type="HOGENOM" id="CLU_035578_2_0_1"/>
<dbReference type="InParanoid" id="A4D7R9"/>
<dbReference type="OMA" id="YPDIMIL"/>
<dbReference type="OrthoDB" id="5914722at2759"/>
<dbReference type="TreeFam" id="TF314162"/>
<dbReference type="Proteomes" id="UP000009136">
    <property type="component" value="Chromosome 4"/>
</dbReference>
<dbReference type="Bgee" id="ENSBTAG00000010756">
    <property type="expression patterns" value="Expressed in prostate gland and 103 other cell types or tissues"/>
</dbReference>
<dbReference type="GO" id="GO:0016020">
    <property type="term" value="C:membrane"/>
    <property type="evidence" value="ECO:0007669"/>
    <property type="project" value="UniProtKB-SubCell"/>
</dbReference>
<dbReference type="CDD" id="cd11557">
    <property type="entry name" value="ST7"/>
    <property type="match status" value="1"/>
</dbReference>
<dbReference type="InterPro" id="IPR007311">
    <property type="entry name" value="ST7"/>
</dbReference>
<dbReference type="PANTHER" id="PTHR12745">
    <property type="entry name" value="SUPPRESSION OF TUMORIGENICITY 7"/>
    <property type="match status" value="1"/>
</dbReference>
<dbReference type="PANTHER" id="PTHR12745:SF10">
    <property type="entry name" value="SUPPRESSOR OF TUMORIGENICITY 7 PROTEIN"/>
    <property type="match status" value="1"/>
</dbReference>
<dbReference type="Pfam" id="PF04184">
    <property type="entry name" value="ST7"/>
    <property type="match status" value="1"/>
</dbReference>
<gene>
    <name type="primary">ST7</name>
</gene>
<name>ST7_BOVIN</name>
<organism>
    <name type="scientific">Bos taurus</name>
    <name type="common">Bovine</name>
    <dbReference type="NCBI Taxonomy" id="9913"/>
    <lineage>
        <taxon>Eukaryota</taxon>
        <taxon>Metazoa</taxon>
        <taxon>Chordata</taxon>
        <taxon>Craniata</taxon>
        <taxon>Vertebrata</taxon>
        <taxon>Euteleostomi</taxon>
        <taxon>Mammalia</taxon>
        <taxon>Eutheria</taxon>
        <taxon>Laurasiatheria</taxon>
        <taxon>Artiodactyla</taxon>
        <taxon>Ruminantia</taxon>
        <taxon>Pecora</taxon>
        <taxon>Bovidae</taxon>
        <taxon>Bovinae</taxon>
        <taxon>Bos</taxon>
    </lineage>
</organism>